<protein>
    <recommendedName>
        <fullName evidence="1">Large ribosomal subunit protein uL23</fullName>
    </recommendedName>
    <alternativeName>
        <fullName evidence="2">50S ribosomal protein L23</fullName>
    </alternativeName>
</protein>
<evidence type="ECO:0000255" key="1">
    <source>
        <dbReference type="HAMAP-Rule" id="MF_01369"/>
    </source>
</evidence>
<evidence type="ECO:0000305" key="2"/>
<proteinExistence type="inferred from homology"/>
<organism>
    <name type="scientific">Haemophilus influenzae (strain ATCC 51907 / DSM 11121 / KW20 / Rd)</name>
    <dbReference type="NCBI Taxonomy" id="71421"/>
    <lineage>
        <taxon>Bacteria</taxon>
        <taxon>Pseudomonadati</taxon>
        <taxon>Pseudomonadota</taxon>
        <taxon>Gammaproteobacteria</taxon>
        <taxon>Pasteurellales</taxon>
        <taxon>Pasteurellaceae</taxon>
        <taxon>Haemophilus</taxon>
    </lineage>
</organism>
<dbReference type="EMBL" id="L42023">
    <property type="protein sequence ID" value="AAC22438.1"/>
    <property type="molecule type" value="Genomic_DNA"/>
</dbReference>
<dbReference type="PIR" id="G64092">
    <property type="entry name" value="G64092"/>
</dbReference>
<dbReference type="RefSeq" id="NP_438938.1">
    <property type="nucleotide sequence ID" value="NC_000907.1"/>
</dbReference>
<dbReference type="SMR" id="P44361"/>
<dbReference type="STRING" id="71421.HI_0779"/>
<dbReference type="EnsemblBacteria" id="AAC22438">
    <property type="protein sequence ID" value="AAC22438"/>
    <property type="gene ID" value="HI_0779"/>
</dbReference>
<dbReference type="KEGG" id="hin:HI_0779"/>
<dbReference type="PATRIC" id="fig|71421.8.peg.818"/>
<dbReference type="eggNOG" id="COG0089">
    <property type="taxonomic scope" value="Bacteria"/>
</dbReference>
<dbReference type="HOGENOM" id="CLU_037562_3_1_6"/>
<dbReference type="OrthoDB" id="9793353at2"/>
<dbReference type="PhylomeDB" id="P44361"/>
<dbReference type="BioCyc" id="HINF71421:G1GJ1-819-MONOMER"/>
<dbReference type="PRO" id="PR:P44361"/>
<dbReference type="Proteomes" id="UP000000579">
    <property type="component" value="Chromosome"/>
</dbReference>
<dbReference type="GO" id="GO:0022625">
    <property type="term" value="C:cytosolic large ribosomal subunit"/>
    <property type="evidence" value="ECO:0000318"/>
    <property type="project" value="GO_Central"/>
</dbReference>
<dbReference type="GO" id="GO:0019843">
    <property type="term" value="F:rRNA binding"/>
    <property type="evidence" value="ECO:0007669"/>
    <property type="project" value="UniProtKB-UniRule"/>
</dbReference>
<dbReference type="GO" id="GO:0003735">
    <property type="term" value="F:structural constituent of ribosome"/>
    <property type="evidence" value="ECO:0000318"/>
    <property type="project" value="GO_Central"/>
</dbReference>
<dbReference type="GO" id="GO:0006412">
    <property type="term" value="P:translation"/>
    <property type="evidence" value="ECO:0007669"/>
    <property type="project" value="UniProtKB-UniRule"/>
</dbReference>
<dbReference type="FunFam" id="3.30.70.330:FF:000001">
    <property type="entry name" value="50S ribosomal protein L23"/>
    <property type="match status" value="1"/>
</dbReference>
<dbReference type="Gene3D" id="3.30.70.330">
    <property type="match status" value="1"/>
</dbReference>
<dbReference type="HAMAP" id="MF_01369_B">
    <property type="entry name" value="Ribosomal_uL23_B"/>
    <property type="match status" value="1"/>
</dbReference>
<dbReference type="InterPro" id="IPR012677">
    <property type="entry name" value="Nucleotide-bd_a/b_plait_sf"/>
</dbReference>
<dbReference type="InterPro" id="IPR013025">
    <property type="entry name" value="Ribosomal_uL23-like"/>
</dbReference>
<dbReference type="InterPro" id="IPR012678">
    <property type="entry name" value="Ribosomal_uL23/eL15/eS24_sf"/>
</dbReference>
<dbReference type="InterPro" id="IPR001014">
    <property type="entry name" value="Ribosomal_uL23_CS"/>
</dbReference>
<dbReference type="NCBIfam" id="NF004358">
    <property type="entry name" value="PRK05738.1-1"/>
    <property type="match status" value="1"/>
</dbReference>
<dbReference type="NCBIfam" id="NF004359">
    <property type="entry name" value="PRK05738.1-3"/>
    <property type="match status" value="1"/>
</dbReference>
<dbReference type="NCBIfam" id="NF004363">
    <property type="entry name" value="PRK05738.2-4"/>
    <property type="match status" value="1"/>
</dbReference>
<dbReference type="PANTHER" id="PTHR11620">
    <property type="entry name" value="60S RIBOSOMAL PROTEIN L23A"/>
    <property type="match status" value="1"/>
</dbReference>
<dbReference type="Pfam" id="PF00276">
    <property type="entry name" value="Ribosomal_L23"/>
    <property type="match status" value="1"/>
</dbReference>
<dbReference type="SUPFAM" id="SSF54189">
    <property type="entry name" value="Ribosomal proteins S24e, L23 and L15e"/>
    <property type="match status" value="1"/>
</dbReference>
<dbReference type="PROSITE" id="PS00050">
    <property type="entry name" value="RIBOSOMAL_L23"/>
    <property type="match status" value="1"/>
</dbReference>
<accession>P44361</accession>
<feature type="chain" id="PRO_0000129410" description="Large ribosomal subunit protein uL23">
    <location>
        <begin position="1"/>
        <end position="99"/>
    </location>
</feature>
<name>RL23_HAEIN</name>
<keyword id="KW-1185">Reference proteome</keyword>
<keyword id="KW-0687">Ribonucleoprotein</keyword>
<keyword id="KW-0689">Ribosomal protein</keyword>
<keyword id="KW-0694">RNA-binding</keyword>
<keyword id="KW-0699">rRNA-binding</keyword>
<comment type="function">
    <text evidence="1">One of the early assembly proteins it binds 23S rRNA. One of the proteins that surrounds the polypeptide exit tunnel on the outside of the ribosome. Forms the main docking site for trigger factor binding to the ribosome.</text>
</comment>
<comment type="subunit">
    <text evidence="1">Part of the 50S ribosomal subunit. Contacts protein L29, and trigger factor when it is bound to the ribosome.</text>
</comment>
<comment type="similarity">
    <text evidence="1">Belongs to the universal ribosomal protein uL23 family.</text>
</comment>
<reference key="1">
    <citation type="journal article" date="1995" name="Science">
        <title>Whole-genome random sequencing and assembly of Haemophilus influenzae Rd.</title>
        <authorList>
            <person name="Fleischmann R.D."/>
            <person name="Adams M.D."/>
            <person name="White O."/>
            <person name="Clayton R.A."/>
            <person name="Kirkness E.F."/>
            <person name="Kerlavage A.R."/>
            <person name="Bult C.J."/>
            <person name="Tomb J.-F."/>
            <person name="Dougherty B.A."/>
            <person name="Merrick J.M."/>
            <person name="McKenney K."/>
            <person name="Sutton G.G."/>
            <person name="FitzHugh W."/>
            <person name="Fields C.A."/>
            <person name="Gocayne J.D."/>
            <person name="Scott J.D."/>
            <person name="Shirley R."/>
            <person name="Liu L.-I."/>
            <person name="Glodek A."/>
            <person name="Kelley J.M."/>
            <person name="Weidman J.F."/>
            <person name="Phillips C.A."/>
            <person name="Spriggs T."/>
            <person name="Hedblom E."/>
            <person name="Cotton M.D."/>
            <person name="Utterback T.R."/>
            <person name="Hanna M.C."/>
            <person name="Nguyen D.T."/>
            <person name="Saudek D.M."/>
            <person name="Brandon R.C."/>
            <person name="Fine L.D."/>
            <person name="Fritchman J.L."/>
            <person name="Fuhrmann J.L."/>
            <person name="Geoghagen N.S.M."/>
            <person name="Gnehm C.L."/>
            <person name="McDonald L.A."/>
            <person name="Small K.V."/>
            <person name="Fraser C.M."/>
            <person name="Smith H.O."/>
            <person name="Venter J.C."/>
        </authorList>
    </citation>
    <scope>NUCLEOTIDE SEQUENCE [LARGE SCALE GENOMIC DNA]</scope>
    <source>
        <strain>ATCC 51907 / DSM 11121 / KW20 / Rd</strain>
    </source>
</reference>
<gene>
    <name evidence="1" type="primary">rplW</name>
    <name evidence="1" type="synonym">rpl23</name>
    <name type="ordered locus">HI_0779</name>
</gene>
<sequence length="99" mass="10898">MSQERLLSVLRAPHISEKATNNAEKSNTVVLKVALDANKAEIAAAVAQLFEVKVDSVRTVVVKGKTKRRGNKMGRRSDWKKAYVTLAEGQNLDFVDSAE</sequence>